<feature type="signal peptide" evidence="1">
    <location>
        <begin position="1"/>
        <end position="23"/>
    </location>
</feature>
<feature type="chain" id="PRO_5002643852" description="Salivary thrombin inhibitor XC-43" evidence="1">
    <location>
        <begin position="24"/>
        <end position="59"/>
    </location>
</feature>
<comment type="function">
    <text evidence="2">Anticoagulant protein that acts as a competitive inhibitor of host thrombin (PubMed:34688666). Inhibits thrombin-mediated host platelet aggregation (PubMed:34688666).</text>
</comment>
<comment type="subunit">
    <text evidence="2">Interacts with human F2 (thrombin).</text>
</comment>
<comment type="subcellular location">
    <subcellularLocation>
        <location evidence="4">Secreted</location>
    </subcellularLocation>
</comment>
<comment type="tissue specificity">
    <text evidence="2">Salivary gland (at protein level).</text>
</comment>
<name>XC43_XENCH</name>
<accession>A2IAB2</accession>
<organism>
    <name type="scientific">Xenopsylla cheopis</name>
    <name type="common">Oriental rat flea</name>
    <name type="synonym">Pulex cheopis</name>
    <dbReference type="NCBI Taxonomy" id="163159"/>
    <lineage>
        <taxon>Eukaryota</taxon>
        <taxon>Metazoa</taxon>
        <taxon>Ecdysozoa</taxon>
        <taxon>Arthropoda</taxon>
        <taxon>Hexapoda</taxon>
        <taxon>Insecta</taxon>
        <taxon>Pterygota</taxon>
        <taxon>Neoptera</taxon>
        <taxon>Endopterygota</taxon>
        <taxon>Siphonaptera</taxon>
        <taxon>Pulicidae</taxon>
        <taxon>Xenopsyllinae</taxon>
        <taxon>Xenopsylla</taxon>
    </lineage>
</organism>
<protein>
    <recommendedName>
        <fullName evidence="4">Salivary thrombin inhibitor XC-43</fullName>
        <shortName evidence="3">XC-43</shortName>
    </recommendedName>
</protein>
<dbReference type="EMBL" id="EF179426">
    <property type="protein sequence ID" value="ABM55432.1"/>
    <property type="molecule type" value="mRNA"/>
</dbReference>
<dbReference type="PDB" id="7MJ5">
    <property type="method" value="X-ray"/>
    <property type="resolution" value="2.15 A"/>
    <property type="chains" value="A/N/O/P/Q/R=24-59"/>
</dbReference>
<dbReference type="PDBsum" id="7MJ5"/>
<dbReference type="SMR" id="A2IAB2"/>
<dbReference type="GO" id="GO:0005576">
    <property type="term" value="C:extracellular region"/>
    <property type="evidence" value="ECO:0007669"/>
    <property type="project" value="UniProtKB-SubCell"/>
</dbReference>
<evidence type="ECO:0000255" key="1"/>
<evidence type="ECO:0000269" key="2">
    <source>
    </source>
</evidence>
<evidence type="ECO:0000303" key="3">
    <source>
    </source>
</evidence>
<evidence type="ECO:0000305" key="4"/>
<evidence type="ECO:0000312" key="5">
    <source>
        <dbReference type="EMBL" id="ABM55432.1"/>
    </source>
</evidence>
<evidence type="ECO:0007744" key="6">
    <source>
        <dbReference type="PDB" id="7MJ5"/>
    </source>
</evidence>
<keyword id="KW-0002">3D-structure</keyword>
<keyword id="KW-1199">Hemostasis impairing toxin</keyword>
<keyword id="KW-1201">Platelet aggregation inhibiting toxin</keyword>
<keyword id="KW-0964">Secreted</keyword>
<keyword id="KW-0732">Signal</keyword>
<keyword id="KW-0800">Toxin</keyword>
<sequence>MNLQFLFIFIAFCVMLFAQIVTAKPVEAEVAQPKLYQRGEGGNGMEPIPEDVLNEALNA</sequence>
<proteinExistence type="evidence at protein level"/>
<reference evidence="5" key="1">
    <citation type="journal article" date="2007" name="BMC Genomics">
        <title>An insight into the sialome of the oriental rat flea, Xenopsylla cheopis (Rots).</title>
        <authorList>
            <person name="Andersen J.F."/>
            <person name="Hinnebusch B.J."/>
            <person name="Lucas D.A."/>
            <person name="Conrads T.P."/>
            <person name="Veenstra T.D."/>
            <person name="Pham V.M."/>
            <person name="Ribeiro J.M."/>
        </authorList>
    </citation>
    <scope>NUCLEOTIDE SEQUENCE [LARGE SCALE MRNA]</scope>
    <source>
        <tissue evidence="5">Salivary gland</tissue>
    </source>
</reference>
<reference evidence="6" key="2">
    <citation type="journal article" date="2021" name="J. Biol. Chem.">
        <title>Identification of a substrate-like cleavage-resistant thrombin inhibitor from the saliva of the flea Xenopsylla cheopis.</title>
        <authorList>
            <person name="Lu S."/>
            <person name="Tirloni L."/>
            <person name="Oliveira M.B."/>
            <person name="Bosio C.F."/>
            <person name="Nardone G.A."/>
            <person name="Zhang Y."/>
            <person name="Hinnebusch B.J."/>
            <person name="Ribeiro J.M."/>
            <person name="Andersen J.F."/>
        </authorList>
    </citation>
    <scope>X-RAY CRYSTALLOGRAPHY (2.15 ANGSTROMS) OF 24-59 IN COMPLEX WITH HUMAN THROMBIN</scope>
    <scope>IDENTIFICATION BY MASS SPECTROMETRY</scope>
    <scope>FUNCTION</scope>
    <scope>INTERACTION WITH HOST THROMBIN</scope>
    <scope>TISSUE SPECIFICITY</scope>
</reference>